<proteinExistence type="inferred from homology"/>
<sequence length="566" mass="64375">MDIKRIILYVIVALLAIALFNAWQRDYPPTPKPTPTVEQPTANGDHPTAYTPPAFTPGAAEKTKKAGTIALTSKVPEARLITVRTDVLDVEIDTQGGNIVSAKLPKYPVSLEEKQTPVQILSGEPNELYVAQSGLTNGNGQPTTVQFESAKKQYVLENGQNQLIVQLTGRAPDGLLVTKTYTFHRDDYAIHLAYQVKNNTSKPWQGSLYTQITRRQPPTEHHHFYVRSYNGASMGSPQTPYEKLSYESLDKQNIDRTSQSGWIAMQQHYFLSAWVPGNPELTYHYYSHVIPASGEPNVYVVGFVSPQMNVAAGSEAATHATLYVGPEIAKRLKGLAPGLERTIDYGWLWPISMLLFWILSAVHAVVKNWGWSIIITTILIKIVFYWFSAKSFRSMARMREMQPRIQALKERHGDDRQALSRATMELYRKEKINPLGGCLPMLIQVPVFIAFYYVIIESVQLRQAPFIFWIHDLSVKDPYYILPIIMGLSMLAQQWLSPTSPDPTQQKMMWILPVIFTVFFINFPAGLVLYWITNNVVQTLQQWYVNKTYESHKAKLKARRARKRKR</sequence>
<dbReference type="EMBL" id="CP001020">
    <property type="protein sequence ID" value="ACJ19355.1"/>
    <property type="molecule type" value="Genomic_DNA"/>
</dbReference>
<dbReference type="RefSeq" id="WP_005769990.1">
    <property type="nucleotide sequence ID" value="NC_011528.1"/>
</dbReference>
<dbReference type="SMR" id="B6J8U7"/>
<dbReference type="KEGG" id="cbc:CbuK_0027"/>
<dbReference type="HOGENOM" id="CLU_016535_3_0_6"/>
<dbReference type="GO" id="GO:0005886">
    <property type="term" value="C:plasma membrane"/>
    <property type="evidence" value="ECO:0007669"/>
    <property type="project" value="UniProtKB-SubCell"/>
</dbReference>
<dbReference type="GO" id="GO:0032977">
    <property type="term" value="F:membrane insertase activity"/>
    <property type="evidence" value="ECO:0007669"/>
    <property type="project" value="InterPro"/>
</dbReference>
<dbReference type="GO" id="GO:0051205">
    <property type="term" value="P:protein insertion into membrane"/>
    <property type="evidence" value="ECO:0007669"/>
    <property type="project" value="TreeGrafter"/>
</dbReference>
<dbReference type="GO" id="GO:0015031">
    <property type="term" value="P:protein transport"/>
    <property type="evidence" value="ECO:0007669"/>
    <property type="project" value="UniProtKB-KW"/>
</dbReference>
<dbReference type="CDD" id="cd20070">
    <property type="entry name" value="5TM_YidC_Alb3"/>
    <property type="match status" value="1"/>
</dbReference>
<dbReference type="CDD" id="cd19961">
    <property type="entry name" value="EcYidC-like_peri"/>
    <property type="match status" value="1"/>
</dbReference>
<dbReference type="Gene3D" id="2.70.98.90">
    <property type="match status" value="1"/>
</dbReference>
<dbReference type="HAMAP" id="MF_01810">
    <property type="entry name" value="YidC_type1"/>
    <property type="match status" value="1"/>
</dbReference>
<dbReference type="InterPro" id="IPR019998">
    <property type="entry name" value="Membr_insert_YidC"/>
</dbReference>
<dbReference type="InterPro" id="IPR028053">
    <property type="entry name" value="Membr_insert_YidC_N"/>
</dbReference>
<dbReference type="InterPro" id="IPR001708">
    <property type="entry name" value="YidC/ALB3/OXA1/COX18"/>
</dbReference>
<dbReference type="InterPro" id="IPR028055">
    <property type="entry name" value="YidC/Oxa/ALB_C"/>
</dbReference>
<dbReference type="InterPro" id="IPR047196">
    <property type="entry name" value="YidC_ALB_C"/>
</dbReference>
<dbReference type="InterPro" id="IPR038221">
    <property type="entry name" value="YidC_periplasmic_sf"/>
</dbReference>
<dbReference type="NCBIfam" id="NF002352">
    <property type="entry name" value="PRK01318.1-3"/>
    <property type="match status" value="1"/>
</dbReference>
<dbReference type="NCBIfam" id="TIGR03593">
    <property type="entry name" value="yidC_nterm"/>
    <property type="match status" value="1"/>
</dbReference>
<dbReference type="NCBIfam" id="TIGR03592">
    <property type="entry name" value="yidC_oxa1_cterm"/>
    <property type="match status" value="1"/>
</dbReference>
<dbReference type="PANTHER" id="PTHR12428:SF65">
    <property type="entry name" value="CYTOCHROME C OXIDASE ASSEMBLY PROTEIN COX18, MITOCHONDRIAL"/>
    <property type="match status" value="1"/>
</dbReference>
<dbReference type="PANTHER" id="PTHR12428">
    <property type="entry name" value="OXA1"/>
    <property type="match status" value="1"/>
</dbReference>
<dbReference type="Pfam" id="PF02096">
    <property type="entry name" value="60KD_IMP"/>
    <property type="match status" value="1"/>
</dbReference>
<dbReference type="Pfam" id="PF14849">
    <property type="entry name" value="YidC_periplas"/>
    <property type="match status" value="1"/>
</dbReference>
<dbReference type="PRINTS" id="PR00701">
    <property type="entry name" value="60KDINNERMP"/>
</dbReference>
<dbReference type="PRINTS" id="PR01900">
    <property type="entry name" value="YIDCPROTEIN"/>
</dbReference>
<keyword id="KW-0997">Cell inner membrane</keyword>
<keyword id="KW-1003">Cell membrane</keyword>
<keyword id="KW-0143">Chaperone</keyword>
<keyword id="KW-0472">Membrane</keyword>
<keyword id="KW-0653">Protein transport</keyword>
<keyword id="KW-0812">Transmembrane</keyword>
<keyword id="KW-1133">Transmembrane helix</keyword>
<keyword id="KW-0813">Transport</keyword>
<feature type="chain" id="PRO_1000187652" description="Membrane protein insertase YidC">
    <location>
        <begin position="1"/>
        <end position="566"/>
    </location>
</feature>
<feature type="transmembrane region" description="Helical" evidence="1">
    <location>
        <begin position="3"/>
        <end position="23"/>
    </location>
</feature>
<feature type="transmembrane region" description="Helical" evidence="1">
    <location>
        <begin position="346"/>
        <end position="366"/>
    </location>
</feature>
<feature type="transmembrane region" description="Helical" evidence="1">
    <location>
        <begin position="369"/>
        <end position="389"/>
    </location>
</feature>
<feature type="transmembrane region" description="Helical" evidence="1">
    <location>
        <begin position="436"/>
        <end position="456"/>
    </location>
</feature>
<feature type="transmembrane region" description="Helical" evidence="1">
    <location>
        <begin position="509"/>
        <end position="529"/>
    </location>
</feature>
<reference key="1">
    <citation type="journal article" date="2009" name="Infect. Immun.">
        <title>Comparative genomics reveal extensive transposon-mediated genomic plasticity and diversity among potential effector proteins within the genus Coxiella.</title>
        <authorList>
            <person name="Beare P.A."/>
            <person name="Unsworth N."/>
            <person name="Andoh M."/>
            <person name="Voth D.E."/>
            <person name="Omsland A."/>
            <person name="Gilk S.D."/>
            <person name="Williams K.P."/>
            <person name="Sobral B.W."/>
            <person name="Kupko J.J. III"/>
            <person name="Porcella S.F."/>
            <person name="Samuel J.E."/>
            <person name="Heinzen R.A."/>
        </authorList>
    </citation>
    <scope>NUCLEOTIDE SEQUENCE [LARGE SCALE GENOMIC DNA]</scope>
    <source>
        <strain>CbuK_Q154</strain>
    </source>
</reference>
<organism>
    <name type="scientific">Coxiella burnetii (strain CbuK_Q154)</name>
    <name type="common">Coxiella burnetii (strain Q154)</name>
    <dbReference type="NCBI Taxonomy" id="434924"/>
    <lineage>
        <taxon>Bacteria</taxon>
        <taxon>Pseudomonadati</taxon>
        <taxon>Pseudomonadota</taxon>
        <taxon>Gammaproteobacteria</taxon>
        <taxon>Legionellales</taxon>
        <taxon>Coxiellaceae</taxon>
        <taxon>Coxiella</taxon>
    </lineage>
</organism>
<accession>B6J8U7</accession>
<gene>
    <name evidence="1" type="primary">yidC</name>
    <name type="ordered locus">CbuK_0027</name>
</gene>
<protein>
    <recommendedName>
        <fullName evidence="1">Membrane protein insertase YidC</fullName>
    </recommendedName>
    <alternativeName>
        <fullName evidence="1">Foldase YidC</fullName>
    </alternativeName>
    <alternativeName>
        <fullName evidence="1">Membrane integrase YidC</fullName>
    </alternativeName>
    <alternativeName>
        <fullName evidence="1">Membrane protein YidC</fullName>
    </alternativeName>
</protein>
<name>YIDC_COXB1</name>
<comment type="function">
    <text evidence="1">Required for the insertion and/or proper folding and/or complex formation of integral membrane proteins into the membrane. Involved in integration of membrane proteins that insert both dependently and independently of the Sec translocase complex, as well as at least some lipoproteins. Aids folding of multispanning membrane proteins.</text>
</comment>
<comment type="subunit">
    <text evidence="1">Interacts with the Sec translocase complex via SecD. Specifically interacts with transmembrane segments of nascent integral membrane proteins during membrane integration.</text>
</comment>
<comment type="subcellular location">
    <subcellularLocation>
        <location evidence="1">Cell inner membrane</location>
        <topology evidence="1">Multi-pass membrane protein</topology>
    </subcellularLocation>
</comment>
<comment type="similarity">
    <text evidence="1">Belongs to the OXA1/ALB3/YidC family. Type 1 subfamily.</text>
</comment>
<evidence type="ECO:0000255" key="1">
    <source>
        <dbReference type="HAMAP-Rule" id="MF_01810"/>
    </source>
</evidence>